<accession>P00934</accession>
<accession>Q6LEK8</accession>
<keyword id="KW-0002">3D-structure</keyword>
<keyword id="KW-0028">Amino-acid biosynthesis</keyword>
<keyword id="KW-0903">Direct protein sequencing</keyword>
<keyword id="KW-0456">Lyase</keyword>
<keyword id="KW-0663">Pyridoxal phosphate</keyword>
<keyword id="KW-1185">Reference proteome</keyword>
<keyword id="KW-0791">Threonine biosynthesis</keyword>
<name>THRC_ECOLI</name>
<sequence>MKLYNLKDHNEQVSFAQAVTQGLGKNQGLFFPHDLPEFSLTEIDEMLKLDFVTRSAKILSAFIGDEIPQEILEERVRAAFAFPAPVANVESDVGCLELFHGPTLAFKDFGGRFMAQMLTHIAGDKPVTILTATSGDTGAAVAHAFYGLPNVKVVILYPRGKISPLQEKLFCTLGGNIETVAIDGDFDACQALVKQAFDDEELKVALGLNSANSINISRLLAQICYYFEAVAQLPQETRNQLVVSVPSGNFGDLTAGLLAKSLGLPVKRFIAATNVNDTVPRFLHDGQWSPKATQATLSNAMDVSQPNNWPRVEELFRRKIWQLKELGYAAVDDETTQQTMRELKELGYTSEPHAAVAYRALRDQLNPGEYGLFLGTAHPAKFKESVEAILGETLDLPKELAERADLPLLSHNLPADFAALRKLMMNHQ</sequence>
<organism>
    <name type="scientific">Escherichia coli (strain K12)</name>
    <dbReference type="NCBI Taxonomy" id="83333"/>
    <lineage>
        <taxon>Bacteria</taxon>
        <taxon>Pseudomonadati</taxon>
        <taxon>Pseudomonadota</taxon>
        <taxon>Gammaproteobacteria</taxon>
        <taxon>Enterobacterales</taxon>
        <taxon>Enterobacteriaceae</taxon>
        <taxon>Escherichia</taxon>
    </lineage>
</organism>
<reference key="1">
    <citation type="journal article" date="1983" name="Nucleic Acids Res.">
        <title>Nucleotide sequence of thrC and of the transcription termination region of the threonine operon in Escherichia coli K12.</title>
        <authorList>
            <person name="Parsot C."/>
            <person name="Cossart P."/>
            <person name="Saint-Girons I."/>
            <person name="Cohen G.N."/>
        </authorList>
    </citation>
    <scope>NUCLEOTIDE SEQUENCE [GENOMIC DNA]</scope>
</reference>
<reference key="2">
    <citation type="journal article" date="1992" name="Nucleic Acids Res.">
        <title>Systematic sequencing of the Escherichia coli genome: analysis of the 0-2.4 min region.</title>
        <authorList>
            <person name="Yura T."/>
            <person name="Mori H."/>
            <person name="Nagai H."/>
            <person name="Nagata T."/>
            <person name="Ishihama A."/>
            <person name="Fujita N."/>
            <person name="Isono K."/>
            <person name="Mizobuchi K."/>
            <person name="Nakata A."/>
        </authorList>
    </citation>
    <scope>NUCLEOTIDE SEQUENCE [LARGE SCALE GENOMIC DNA]</scope>
    <source>
        <strain>K12</strain>
    </source>
</reference>
<reference key="3">
    <citation type="journal article" date="1995" name="Nucleic Acids Res.">
        <title>Analysis of the Escherichia coli genome VI: DNA sequence of the region from 92.8 through 100 minutes.</title>
        <authorList>
            <person name="Burland V.D."/>
            <person name="Plunkett G. III"/>
            <person name="Sofia H.J."/>
            <person name="Daniels D.L."/>
            <person name="Blattner F.R."/>
        </authorList>
    </citation>
    <scope>NUCLEOTIDE SEQUENCE [LARGE SCALE GENOMIC DNA]</scope>
    <source>
        <strain>K12 / MG1655 / ATCC 47076</strain>
    </source>
</reference>
<reference key="4">
    <citation type="journal article" date="1997" name="Science">
        <title>The complete genome sequence of Escherichia coli K-12.</title>
        <authorList>
            <person name="Blattner F.R."/>
            <person name="Plunkett G. III"/>
            <person name="Bloch C.A."/>
            <person name="Perna N.T."/>
            <person name="Burland V."/>
            <person name="Riley M."/>
            <person name="Collado-Vides J."/>
            <person name="Glasner J.D."/>
            <person name="Rode C.K."/>
            <person name="Mayhew G.F."/>
            <person name="Gregor J."/>
            <person name="Davis N.W."/>
            <person name="Kirkpatrick H.A."/>
            <person name="Goeden M.A."/>
            <person name="Rose D.J."/>
            <person name="Mau B."/>
            <person name="Shao Y."/>
        </authorList>
    </citation>
    <scope>NUCLEOTIDE SEQUENCE [LARGE SCALE GENOMIC DNA]</scope>
    <source>
        <strain>K12 / MG1655 / ATCC 47076</strain>
    </source>
</reference>
<reference key="5">
    <citation type="journal article" date="2006" name="Mol. Syst. Biol.">
        <title>Highly accurate genome sequences of Escherichia coli K-12 strains MG1655 and W3110.</title>
        <authorList>
            <person name="Hayashi K."/>
            <person name="Morooka N."/>
            <person name="Yamamoto Y."/>
            <person name="Fujita K."/>
            <person name="Isono K."/>
            <person name="Choi S."/>
            <person name="Ohtsubo E."/>
            <person name="Baba T."/>
            <person name="Wanner B.L."/>
            <person name="Mori H."/>
            <person name="Horiuchi T."/>
        </authorList>
    </citation>
    <scope>NUCLEOTIDE SEQUENCE [LARGE SCALE GENOMIC DNA]</scope>
    <source>
        <strain>K12 / W3110 / ATCC 27325 / DSM 5911</strain>
    </source>
</reference>
<reference key="6">
    <citation type="journal article" date="1997" name="Electrophoresis">
        <title>Comparing the predicted and observed properties of proteins encoded in the genome of Escherichia coli K-12.</title>
        <authorList>
            <person name="Link A.J."/>
            <person name="Robison K."/>
            <person name="Church G.M."/>
        </authorList>
    </citation>
    <scope>PROTEIN SEQUENCE OF 1-12</scope>
    <source>
        <strain>K12 / EMG2</strain>
    </source>
</reference>
<reference key="7">
    <citation type="journal article" date="1998" name="J. Mol. Biol.">
        <title>Protein identification with N and C-terminal sequence tags in proteome projects.</title>
        <authorList>
            <person name="Wilkins M.R."/>
            <person name="Gasteiger E."/>
            <person name="Tonella L."/>
            <person name="Ou K."/>
            <person name="Tyler M."/>
            <person name="Sanchez J.-C."/>
            <person name="Gooley A.A."/>
            <person name="Walsh B.J."/>
            <person name="Bairoch A."/>
            <person name="Appel R.D."/>
            <person name="Williams K.L."/>
            <person name="Hochstrasser D.F."/>
        </authorList>
    </citation>
    <scope>PROTEIN SEQUENCE OF 1-4</scope>
    <source>
        <strain>K12 / W3110 / ATCC 27325 / DSM 5911</strain>
    </source>
</reference>
<reference key="8">
    <citation type="journal article" date="1994" name="Biochemistry">
        <title>Mechanisms of interaction of Escherichia coli threonine synthase with substrates and inhibitors.</title>
        <authorList>
            <person name="Laber B."/>
            <person name="Gerbling K.P."/>
            <person name="Harde C."/>
            <person name="Neff K.H."/>
            <person name="Nordhoff E."/>
            <person name="Pohlenz H.D."/>
        </authorList>
    </citation>
    <scope>FUNCTION</scope>
    <scope>CATALYTIC ACTIVITY</scope>
    <scope>COFACTOR</scope>
    <scope>SUBSTRATE SPECIFICITY</scope>
    <scope>ACTIVITY REGULATION</scope>
    <scope>KINETIC PARAMETERS</scope>
</reference>
<reference key="9">
    <citation type="submission" date="2009-02" db="PDB data bank">
        <title>Crystal structure of threonine synthase from Escherichia coli.</title>
        <authorList>
            <person name="Omi R."/>
            <person name="Goto M."/>
            <person name="Miyahara I."/>
            <person name="Mizuguchi H."/>
            <person name="Hayashi H."/>
            <person name="Kagamiyama H."/>
            <person name="Hirotsu K."/>
        </authorList>
    </citation>
    <scope>X-RAY CRYSTALLOGRAPHY (2.2 ANGSTROMS)</scope>
</reference>
<protein>
    <recommendedName>
        <fullName>Threonine synthase</fullName>
        <shortName>TS</shortName>
        <ecNumber>4.2.3.1</ecNumber>
    </recommendedName>
</protein>
<proteinExistence type="evidence at protein level"/>
<feature type="chain" id="PRO_0000185631" description="Threonine synthase">
    <location>
        <begin position="1"/>
        <end position="428"/>
    </location>
</feature>
<feature type="modified residue" description="N6-(pyridoxal phosphate)lysine" evidence="1">
    <location>
        <position position="107"/>
    </location>
</feature>
<feature type="strand" evidence="4">
    <location>
        <begin position="3"/>
        <end position="5"/>
    </location>
</feature>
<feature type="strand" evidence="4">
    <location>
        <begin position="8"/>
        <end position="13"/>
    </location>
</feature>
<feature type="helix" evidence="4">
    <location>
        <begin position="15"/>
        <end position="21"/>
    </location>
</feature>
<feature type="helix" evidence="4">
    <location>
        <begin position="25"/>
        <end position="27"/>
    </location>
</feature>
<feature type="strand" evidence="4">
    <location>
        <begin position="30"/>
        <end position="34"/>
    </location>
</feature>
<feature type="helix" evidence="4">
    <location>
        <begin position="40"/>
        <end position="46"/>
    </location>
</feature>
<feature type="helix" evidence="4">
    <location>
        <begin position="51"/>
        <end position="63"/>
    </location>
</feature>
<feature type="helix" evidence="4">
    <location>
        <begin position="64"/>
        <end position="66"/>
    </location>
</feature>
<feature type="helix" evidence="4">
    <location>
        <begin position="69"/>
        <end position="79"/>
    </location>
</feature>
<feature type="strand" evidence="4">
    <location>
        <begin position="86"/>
        <end position="90"/>
    </location>
</feature>
<feature type="strand" evidence="4">
    <location>
        <begin position="93"/>
        <end position="97"/>
    </location>
</feature>
<feature type="helix" evidence="4">
    <location>
        <begin position="107"/>
        <end position="121"/>
    </location>
</feature>
<feature type="turn" evidence="4">
    <location>
        <begin position="122"/>
        <end position="124"/>
    </location>
</feature>
<feature type="strand" evidence="4">
    <location>
        <begin position="127"/>
        <end position="132"/>
    </location>
</feature>
<feature type="strand" evidence="4">
    <location>
        <begin position="134"/>
        <end position="136"/>
    </location>
</feature>
<feature type="helix" evidence="4">
    <location>
        <begin position="137"/>
        <end position="144"/>
    </location>
</feature>
<feature type="turn" evidence="4">
    <location>
        <begin position="145"/>
        <end position="147"/>
    </location>
</feature>
<feature type="strand" evidence="4">
    <location>
        <begin position="151"/>
        <end position="158"/>
    </location>
</feature>
<feature type="helix" evidence="4">
    <location>
        <begin position="164"/>
        <end position="171"/>
    </location>
</feature>
<feature type="strand" evidence="4">
    <location>
        <begin position="177"/>
        <end position="184"/>
    </location>
</feature>
<feature type="helix" evidence="4">
    <location>
        <begin position="186"/>
        <end position="195"/>
    </location>
</feature>
<feature type="helix" evidence="4">
    <location>
        <begin position="196"/>
        <end position="198"/>
    </location>
</feature>
<feature type="helix" evidence="4">
    <location>
        <begin position="200"/>
        <end position="206"/>
    </location>
</feature>
<feature type="helix" evidence="4">
    <location>
        <begin position="216"/>
        <end position="221"/>
    </location>
</feature>
<feature type="helix" evidence="4">
    <location>
        <begin position="224"/>
        <end position="230"/>
    </location>
</feature>
<feature type="turn" evidence="4">
    <location>
        <begin position="235"/>
        <end position="239"/>
    </location>
</feature>
<feature type="strand" evidence="4">
    <location>
        <begin position="240"/>
        <end position="246"/>
    </location>
</feature>
<feature type="helix" evidence="4">
    <location>
        <begin position="251"/>
        <end position="261"/>
    </location>
</feature>
<feature type="strand" evidence="4">
    <location>
        <begin position="267"/>
        <end position="273"/>
    </location>
</feature>
<feature type="helix" evidence="4">
    <location>
        <begin position="278"/>
        <end position="285"/>
    </location>
</feature>
<feature type="helix" evidence="4">
    <location>
        <begin position="299"/>
        <end position="301"/>
    </location>
</feature>
<feature type="helix" evidence="4">
    <location>
        <begin position="309"/>
        <end position="318"/>
    </location>
</feature>
<feature type="helix" evidence="4">
    <location>
        <begin position="323"/>
        <end position="325"/>
    </location>
</feature>
<feature type="strand" evidence="4">
    <location>
        <begin position="326"/>
        <end position="330"/>
    </location>
</feature>
<feature type="helix" evidence="4">
    <location>
        <begin position="333"/>
        <end position="345"/>
    </location>
</feature>
<feature type="helix" evidence="4">
    <location>
        <begin position="352"/>
        <end position="362"/>
    </location>
</feature>
<feature type="strand" evidence="4">
    <location>
        <begin position="370"/>
        <end position="375"/>
    </location>
</feature>
<feature type="helix" evidence="4">
    <location>
        <begin position="379"/>
        <end position="382"/>
    </location>
</feature>
<feature type="helix" evidence="4">
    <location>
        <begin position="383"/>
        <end position="390"/>
    </location>
</feature>
<feature type="helix" evidence="4">
    <location>
        <begin position="398"/>
        <end position="404"/>
    </location>
</feature>
<feature type="strand" evidence="4">
    <location>
        <begin position="411"/>
        <end position="415"/>
    </location>
</feature>
<feature type="helix" evidence="4">
    <location>
        <begin position="417"/>
        <end position="424"/>
    </location>
</feature>
<dbReference type="EC" id="4.2.3.1"/>
<dbReference type="EMBL" id="U14003">
    <property type="protein sequence ID" value="AAA97303.1"/>
    <property type="molecule type" value="Genomic_DNA"/>
</dbReference>
<dbReference type="EMBL" id="J01706">
    <property type="protein sequence ID" value="AAA83916.1"/>
    <property type="molecule type" value="Genomic_DNA"/>
</dbReference>
<dbReference type="EMBL" id="U00096">
    <property type="protein sequence ID" value="AAC73115.1"/>
    <property type="molecule type" value="Genomic_DNA"/>
</dbReference>
<dbReference type="EMBL" id="AP009048">
    <property type="protein sequence ID" value="BAB96581.1"/>
    <property type="molecule type" value="Genomic_DNA"/>
</dbReference>
<dbReference type="PIR" id="A01157">
    <property type="entry name" value="SYECR"/>
</dbReference>
<dbReference type="RefSeq" id="NP_414545.1">
    <property type="nucleotide sequence ID" value="NC_000913.3"/>
</dbReference>
<dbReference type="RefSeq" id="WP_000781074.1">
    <property type="nucleotide sequence ID" value="NZ_LN832404.1"/>
</dbReference>
<dbReference type="PDB" id="1VB3">
    <property type="method" value="X-ray"/>
    <property type="resolution" value="2.20 A"/>
    <property type="chains" value="A=1-428"/>
</dbReference>
<dbReference type="PDBsum" id="1VB3"/>
<dbReference type="SMR" id="P00934"/>
<dbReference type="BioGRID" id="4261935">
    <property type="interactions" value="248"/>
</dbReference>
<dbReference type="BioGRID" id="849584">
    <property type="interactions" value="1"/>
</dbReference>
<dbReference type="DIP" id="DIP-10993N"/>
<dbReference type="FunCoup" id="P00934">
    <property type="interactions" value="613"/>
</dbReference>
<dbReference type="IntAct" id="P00934">
    <property type="interactions" value="4"/>
</dbReference>
<dbReference type="STRING" id="511145.b0004"/>
<dbReference type="jPOST" id="P00934"/>
<dbReference type="PaxDb" id="511145-b0004"/>
<dbReference type="EnsemblBacteria" id="AAC73115">
    <property type="protein sequence ID" value="AAC73115"/>
    <property type="gene ID" value="b0004"/>
</dbReference>
<dbReference type="GeneID" id="945198"/>
<dbReference type="KEGG" id="ecj:JW0003"/>
<dbReference type="KEGG" id="eco:b0004"/>
<dbReference type="KEGG" id="ecoc:C3026_00020"/>
<dbReference type="PATRIC" id="fig|1411691.4.peg.2279"/>
<dbReference type="EchoBASE" id="EB0993"/>
<dbReference type="eggNOG" id="COG0498">
    <property type="taxonomic scope" value="Bacteria"/>
</dbReference>
<dbReference type="HOGENOM" id="CLU_015170_0_0_6"/>
<dbReference type="InParanoid" id="P00934"/>
<dbReference type="OMA" id="KGYLCEP"/>
<dbReference type="OrthoDB" id="9763107at2"/>
<dbReference type="PhylomeDB" id="P00934"/>
<dbReference type="BioCyc" id="EcoCyc:THRESYN-MONOMER"/>
<dbReference type="BioCyc" id="MetaCyc:THRESYN-MONOMER"/>
<dbReference type="BRENDA" id="4.2.3.1">
    <property type="organism ID" value="2026"/>
</dbReference>
<dbReference type="SABIO-RK" id="P00934"/>
<dbReference type="UniPathway" id="UPA00050">
    <property type="reaction ID" value="UER00065"/>
</dbReference>
<dbReference type="EvolutionaryTrace" id="P00934"/>
<dbReference type="PRO" id="PR:P00934"/>
<dbReference type="Proteomes" id="UP000000625">
    <property type="component" value="Chromosome"/>
</dbReference>
<dbReference type="GO" id="GO:0005829">
    <property type="term" value="C:cytosol"/>
    <property type="evidence" value="ECO:0000314"/>
    <property type="project" value="EcoCyc"/>
</dbReference>
<dbReference type="GO" id="GO:0030170">
    <property type="term" value="F:pyridoxal phosphate binding"/>
    <property type="evidence" value="ECO:0007669"/>
    <property type="project" value="InterPro"/>
</dbReference>
<dbReference type="GO" id="GO:0004795">
    <property type="term" value="F:threonine synthase activity"/>
    <property type="evidence" value="ECO:0000314"/>
    <property type="project" value="EcoCyc"/>
</dbReference>
<dbReference type="GO" id="GO:0009088">
    <property type="term" value="P:threonine biosynthetic process"/>
    <property type="evidence" value="ECO:0000315"/>
    <property type="project" value="EcoCyc"/>
</dbReference>
<dbReference type="CDD" id="cd01560">
    <property type="entry name" value="Thr-synth_2"/>
    <property type="match status" value="1"/>
</dbReference>
<dbReference type="FunFam" id="3.40.50.1100:FF:000026">
    <property type="entry name" value="Threonine synthase"/>
    <property type="match status" value="1"/>
</dbReference>
<dbReference type="FunFam" id="3.90.1380.10:FF:000001">
    <property type="entry name" value="Threonine synthase"/>
    <property type="match status" value="1"/>
</dbReference>
<dbReference type="Gene3D" id="3.40.50.1100">
    <property type="match status" value="2"/>
</dbReference>
<dbReference type="Gene3D" id="3.90.1380.10">
    <property type="entry name" value="Threonine synthase, N-terminal domain"/>
    <property type="match status" value="1"/>
</dbReference>
<dbReference type="InterPro" id="IPR000634">
    <property type="entry name" value="Ser/Thr_deHydtase_PyrdxlP-BS"/>
</dbReference>
<dbReference type="InterPro" id="IPR029144">
    <property type="entry name" value="Thr_synth_N"/>
</dbReference>
<dbReference type="InterPro" id="IPR037158">
    <property type="entry name" value="Thr_synth_N_sf"/>
</dbReference>
<dbReference type="InterPro" id="IPR004450">
    <property type="entry name" value="Thr_synthase-like"/>
</dbReference>
<dbReference type="InterPro" id="IPR051166">
    <property type="entry name" value="Threonine_Synthase"/>
</dbReference>
<dbReference type="InterPro" id="IPR001926">
    <property type="entry name" value="TrpB-like_PALP"/>
</dbReference>
<dbReference type="InterPro" id="IPR036052">
    <property type="entry name" value="TrpB-like_PALP_sf"/>
</dbReference>
<dbReference type="NCBIfam" id="TIGR00260">
    <property type="entry name" value="thrC"/>
    <property type="match status" value="1"/>
</dbReference>
<dbReference type="PANTHER" id="PTHR42690">
    <property type="entry name" value="THREONINE SYNTHASE FAMILY MEMBER"/>
    <property type="match status" value="1"/>
</dbReference>
<dbReference type="PANTHER" id="PTHR42690:SF1">
    <property type="entry name" value="THREONINE SYNTHASE-LIKE 2"/>
    <property type="match status" value="1"/>
</dbReference>
<dbReference type="Pfam" id="PF00291">
    <property type="entry name" value="PALP"/>
    <property type="match status" value="1"/>
</dbReference>
<dbReference type="Pfam" id="PF14821">
    <property type="entry name" value="Thr_synth_N"/>
    <property type="match status" value="1"/>
</dbReference>
<dbReference type="SUPFAM" id="SSF53686">
    <property type="entry name" value="Tryptophan synthase beta subunit-like PLP-dependent enzymes"/>
    <property type="match status" value="1"/>
</dbReference>
<dbReference type="PROSITE" id="PS00165">
    <property type="entry name" value="DEHYDRATASE_SER_THR"/>
    <property type="match status" value="1"/>
</dbReference>
<evidence type="ECO:0000250" key="1"/>
<evidence type="ECO:0000269" key="2">
    <source>
    </source>
</evidence>
<evidence type="ECO:0000305" key="3"/>
<evidence type="ECO:0007829" key="4">
    <source>
        <dbReference type="PDB" id="1VB3"/>
    </source>
</evidence>
<comment type="function">
    <text evidence="2">Catalyzes the gamma-elimination of phosphate from L-phosphohomoserine and the beta-addition of water to produce L-threonine. To a lesser extent, is able to slowly catalyze the deamination of L-threonine into alpha-ketobutyrate and that of L-serine and 3-chloroalanine into pyruvate. Is also able to rapidly convert vinylglycine to threonine, which proves that the pyridoxal p-quinonoid of vinylglycine is an intermediate in the TS reaction.</text>
</comment>
<comment type="catalytic activity">
    <reaction evidence="2">
        <text>O-phospho-L-homoserine + H2O = L-threonine + phosphate</text>
        <dbReference type="Rhea" id="RHEA:10840"/>
        <dbReference type="ChEBI" id="CHEBI:15377"/>
        <dbReference type="ChEBI" id="CHEBI:43474"/>
        <dbReference type="ChEBI" id="CHEBI:57590"/>
        <dbReference type="ChEBI" id="CHEBI:57926"/>
        <dbReference type="EC" id="4.2.3.1"/>
    </reaction>
</comment>
<comment type="cofactor">
    <cofactor evidence="2">
        <name>pyridoxal 5'-phosphate</name>
        <dbReference type="ChEBI" id="CHEBI:597326"/>
    </cofactor>
</comment>
<comment type="activity regulation">
    <text evidence="2">Is competitively inhibited by L-threo-3-hydroxyhomoserine phosphate.</text>
</comment>
<comment type="biophysicochemical properties">
    <kinetics>
        <KM evidence="2">0.5 mM for O-phospho-L-homoserine</KM>
        <Vmax evidence="2">9.3 umol/min/mg enzyme</Vmax>
    </kinetics>
</comment>
<comment type="pathway">
    <text>Amino-acid biosynthesis; L-threonine biosynthesis; L-threonine from L-aspartate: step 5/5.</text>
</comment>
<comment type="similarity">
    <text evidence="3">Belongs to the threonine synthase family.</text>
</comment>
<gene>
    <name type="primary">thrC</name>
    <name type="ordered locus">b0004</name>
    <name type="ordered locus">JW0003</name>
</gene>